<proteinExistence type="evidence at protein level"/>
<accession>Q1MJ95</accession>
<protein>
    <recommendedName>
        <fullName evidence="5">Dodecaprenyl-phosphate galacturonate synthase</fullName>
        <shortName evidence="5">Dod-P-GalA synthase</shortName>
        <ecNumber evidence="5">2.4.1.-</ecNumber>
    </recommendedName>
    <alternativeName>
        <fullName evidence="5">Dodecaprenyl-phosphate galacturonosyltransferase RgtE</fullName>
    </alternativeName>
    <alternativeName>
        <fullName evidence="3">Galacturonic acid transferase RgtE</fullName>
        <shortName evidence="3">GalA transferase RgtE</shortName>
        <shortName evidence="3">GalAT RgtE</shortName>
    </alternativeName>
</protein>
<keyword id="KW-1003">Cell membrane</keyword>
<keyword id="KW-0328">Glycosyltransferase</keyword>
<keyword id="KW-0448">Lipopolysaccharide biosynthesis</keyword>
<keyword id="KW-0472">Membrane</keyword>
<keyword id="KW-0808">Transferase</keyword>
<keyword id="KW-0812">Transmembrane</keyword>
<keyword id="KW-1133">Transmembrane helix</keyword>
<sequence>MQTTVEPIRGTNDPVQSLELSLVVPIFNEEQSVGPLVERVAAAMVSYPHRWELILVDDGSTDATLVNARKYVGREGLALRIVELQRNFGQTAAMQAGIDTARGRLIATMDGDLQNDPKDIPSMVSELERRELDLLVGWRKNRKDGLFLRKIPSWCANYLIGRITGVKLHDYGCSLKIYRASIIKQVKLMGEMHRFIPAWVAGVVPSSRIGEMAVTHHAREHGVSKYGISRTFRVILDLLSVMFFMRYKARPGHFFGSLGLGLGALAMLILLYLGFDKFILGNDIGTRPMLMVGVVLLLSSVQMITTGILAEMIARTYYRDDASPNYIVRQIFDDQSQA</sequence>
<evidence type="ECO:0000255" key="1"/>
<evidence type="ECO:0000269" key="2">
    <source>
    </source>
</evidence>
<evidence type="ECO:0000303" key="3">
    <source>
    </source>
</evidence>
<evidence type="ECO:0000305" key="4"/>
<evidence type="ECO:0000305" key="5">
    <source>
    </source>
</evidence>
<evidence type="ECO:0000312" key="6">
    <source>
        <dbReference type="EMBL" id="CAK06965.1"/>
    </source>
</evidence>
<reference key="1">
    <citation type="journal article" date="2006" name="Genome Biol.">
        <title>The genome of Rhizobium leguminosarum has recognizable core and accessory components.</title>
        <authorList>
            <person name="Young J.P.W."/>
            <person name="Crossman L.C."/>
            <person name="Johnston A.W.B."/>
            <person name="Thomson N.R."/>
            <person name="Ghazoui Z.F."/>
            <person name="Hull K.H."/>
            <person name="Wexler M."/>
            <person name="Curson A.R.J."/>
            <person name="Todd J.D."/>
            <person name="Poole P.S."/>
            <person name="Mauchline T.H."/>
            <person name="East A.K."/>
            <person name="Quail M.A."/>
            <person name="Churcher C."/>
            <person name="Arrowsmith C."/>
            <person name="Cherevach I."/>
            <person name="Chillingworth T."/>
            <person name="Clarke K."/>
            <person name="Cronin A."/>
            <person name="Davis P."/>
            <person name="Fraser A."/>
            <person name="Hance Z."/>
            <person name="Hauser H."/>
            <person name="Jagels K."/>
            <person name="Moule S."/>
            <person name="Mungall K."/>
            <person name="Norbertczak H."/>
            <person name="Rabbinowitsch E."/>
            <person name="Sanders M."/>
            <person name="Simmonds M."/>
            <person name="Whitehead S."/>
            <person name="Parkhill J."/>
        </authorList>
    </citation>
    <scope>NUCLEOTIDE SEQUENCE [LARGE SCALE GENOMIC DNA]</scope>
    <source>
        <strain>DSM 114642 / LMG 32736 / 3841</strain>
    </source>
</reference>
<reference key="2">
    <citation type="journal article" date="2012" name="J. Biol. Chem.">
        <title>Characterization of galacturonosyl transferase genes rgtA, rgtB, rgtC, rgtD, and rgtE responsible for lipopolysaccharide synthesis in nitrogen-fixing endosymbiont Rhizobium leguminosarum: lipopolysaccharide core and lipid galacturonosyl residues confer membrane stability.</title>
        <authorList>
            <person name="Brown D.B."/>
            <person name="Forsberg L.S."/>
            <person name="Kannenberg E.L."/>
            <person name="Carlson R.W."/>
        </authorList>
    </citation>
    <scope>FUNCTION</scope>
    <scope>DISRUPTION PHENOTYPE</scope>
    <scope>CATALYTIC ACTIVITY</scope>
    <source>
        <strain>DSM 114642 / LMG 32736 / 3841</strain>
    </source>
</reference>
<name>RGTE_RHIJ3</name>
<dbReference type="EC" id="2.4.1.-" evidence="5"/>
<dbReference type="EMBL" id="AM236080">
    <property type="protein sequence ID" value="CAK06965.1"/>
    <property type="molecule type" value="Genomic_DNA"/>
</dbReference>
<dbReference type="RefSeq" id="WP_003546851.1">
    <property type="nucleotide sequence ID" value="NC_008380.1"/>
</dbReference>
<dbReference type="SMR" id="Q1MJ95"/>
<dbReference type="CAZy" id="GT2">
    <property type="family name" value="Glycosyltransferase Family 2"/>
</dbReference>
<dbReference type="EnsemblBacteria" id="CAK06965">
    <property type="protein sequence ID" value="CAK06965"/>
    <property type="gene ID" value="RL1470"/>
</dbReference>
<dbReference type="KEGG" id="rle:RL1470"/>
<dbReference type="eggNOG" id="COG0463">
    <property type="taxonomic scope" value="Bacteria"/>
</dbReference>
<dbReference type="HOGENOM" id="CLU_033536_0_0_5"/>
<dbReference type="Proteomes" id="UP000006575">
    <property type="component" value="Chromosome"/>
</dbReference>
<dbReference type="GO" id="GO:0005886">
    <property type="term" value="C:plasma membrane"/>
    <property type="evidence" value="ECO:0007669"/>
    <property type="project" value="UniProtKB-SubCell"/>
</dbReference>
<dbReference type="GO" id="GO:0016757">
    <property type="term" value="F:glycosyltransferase activity"/>
    <property type="evidence" value="ECO:0007669"/>
    <property type="project" value="UniProtKB-KW"/>
</dbReference>
<dbReference type="GO" id="GO:0030259">
    <property type="term" value="P:lipid glycosylation"/>
    <property type="evidence" value="ECO:0000315"/>
    <property type="project" value="UniProtKB"/>
</dbReference>
<dbReference type="GO" id="GO:0009103">
    <property type="term" value="P:lipopolysaccharide biosynthetic process"/>
    <property type="evidence" value="ECO:0000315"/>
    <property type="project" value="UniProtKB"/>
</dbReference>
<dbReference type="CDD" id="cd04187">
    <property type="entry name" value="DPM1_like_bac"/>
    <property type="match status" value="1"/>
</dbReference>
<dbReference type="FunFam" id="3.90.550.10:FF:000158">
    <property type="entry name" value="Glycosyl transferase family 2"/>
    <property type="match status" value="1"/>
</dbReference>
<dbReference type="Gene3D" id="3.90.550.10">
    <property type="entry name" value="Spore Coat Polysaccharide Biosynthesis Protein SpsA, Chain A"/>
    <property type="match status" value="1"/>
</dbReference>
<dbReference type="InterPro" id="IPR001173">
    <property type="entry name" value="Glyco_trans_2-like"/>
</dbReference>
<dbReference type="InterPro" id="IPR050256">
    <property type="entry name" value="Glycosyltransferase_2"/>
</dbReference>
<dbReference type="InterPro" id="IPR029044">
    <property type="entry name" value="Nucleotide-diphossugar_trans"/>
</dbReference>
<dbReference type="PANTHER" id="PTHR48090:SF3">
    <property type="entry name" value="UNDECAPRENYL-PHOSPHATE 4-DEOXY-4-FORMAMIDO-L-ARABINOSE TRANSFERASE"/>
    <property type="match status" value="1"/>
</dbReference>
<dbReference type="PANTHER" id="PTHR48090">
    <property type="entry name" value="UNDECAPRENYL-PHOSPHATE 4-DEOXY-4-FORMAMIDO-L-ARABINOSE TRANSFERASE-RELATED"/>
    <property type="match status" value="1"/>
</dbReference>
<dbReference type="Pfam" id="PF00535">
    <property type="entry name" value="Glycos_transf_2"/>
    <property type="match status" value="1"/>
</dbReference>
<dbReference type="SUPFAM" id="SSF53448">
    <property type="entry name" value="Nucleotide-diphospho-sugar transferases"/>
    <property type="match status" value="1"/>
</dbReference>
<gene>
    <name evidence="3" type="primary">rgtE</name>
    <name evidence="6" type="ordered locus">RL1470</name>
</gene>
<feature type="chain" id="PRO_0000436513" description="Dodecaprenyl-phosphate galacturonate synthase">
    <location>
        <begin position="1"/>
        <end position="338"/>
    </location>
</feature>
<feature type="transmembrane region" description="Helical" evidence="1">
    <location>
        <begin position="254"/>
        <end position="274"/>
    </location>
</feature>
<feature type="transmembrane region" description="Helical" evidence="1">
    <location>
        <begin position="289"/>
        <end position="309"/>
    </location>
</feature>
<organism>
    <name type="scientific">Rhizobium johnstonii (strain DSM 114642 / LMG 32736 / 3841)</name>
    <name type="common">Rhizobium leguminosarum bv. viciae</name>
    <dbReference type="NCBI Taxonomy" id="216596"/>
    <lineage>
        <taxon>Bacteria</taxon>
        <taxon>Pseudomonadati</taxon>
        <taxon>Pseudomonadota</taxon>
        <taxon>Alphaproteobacteria</taxon>
        <taxon>Hyphomicrobiales</taxon>
        <taxon>Rhizobiaceae</taxon>
        <taxon>Rhizobium/Agrobacterium group</taxon>
        <taxon>Rhizobium</taxon>
        <taxon>Rhizobium johnstonii</taxon>
    </lineage>
</organism>
<comment type="function">
    <text evidence="2">Glycosyltransferase that catalyzes the synthesis of dodecaprenyl-phosphate galacturonate (Dod-P-GalA), likely from UDP-GalA and dodecaprenyl-phosphate. Dod-P-GalA is the lipid donor required for GalA transfer to lipopolysaccharide (LPS) specific residues catalyzed by the GalA transferases RgtA, RgtB, RgtC and RgtD.</text>
</comment>
<comment type="catalytic activity">
    <reaction evidence="5">
        <text>di-trans,nona-cis-dodecaprenyl phosphate + UDP-alpha-D-galacturonate = beta-D-galacturonosyl di-trans,nona-cis-dodecaprenyl phosphate + UDP</text>
        <dbReference type="Rhea" id="RHEA:26006"/>
        <dbReference type="ChEBI" id="CHEBI:57635"/>
        <dbReference type="ChEBI" id="CHEBI:58223"/>
        <dbReference type="ChEBI" id="CHEBI:142217"/>
        <dbReference type="ChEBI" id="CHEBI:142345"/>
    </reaction>
</comment>
<comment type="subcellular location">
    <subcellularLocation>
        <location evidence="1">Cell membrane</location>
        <topology evidence="1">Multi-pass membrane protein</topology>
    </subcellularLocation>
</comment>
<comment type="disruption phenotype">
    <text evidence="2">Lack of Dod-P-GalA in total lipid extracts. The membranes of the rgtE mutant are unable to provide the substrate for heterologously expressed RgtA activity. Cells lacking this gene produce an LPS that is devoid of GalA. They are also more susceptible to deoxycholic acid and to the polycationic antimicrobial peptide PmxB when compared with the parent strain. Pea plants inoculated with rgtE-deficient mutant show discoloration and wilting of the early leaves.</text>
</comment>
<comment type="similarity">
    <text evidence="4">Belongs to the glycosyltransferase 2 family.</text>
</comment>